<proteinExistence type="predicted"/>
<reference key="1">
    <citation type="journal article" date="2002" name="Nature">
        <title>The genome sequence of Schizosaccharomyces pombe.</title>
        <authorList>
            <person name="Wood V."/>
            <person name="Gwilliam R."/>
            <person name="Rajandream M.A."/>
            <person name="Lyne M.H."/>
            <person name="Lyne R."/>
            <person name="Stewart A."/>
            <person name="Sgouros J.G."/>
            <person name="Peat N."/>
            <person name="Hayles J."/>
            <person name="Baker S.G."/>
            <person name="Basham D."/>
            <person name="Bowman S."/>
            <person name="Brooks K."/>
            <person name="Brown D."/>
            <person name="Brown S."/>
            <person name="Chillingworth T."/>
            <person name="Churcher C.M."/>
            <person name="Collins M."/>
            <person name="Connor R."/>
            <person name="Cronin A."/>
            <person name="Davis P."/>
            <person name="Feltwell T."/>
            <person name="Fraser A."/>
            <person name="Gentles S."/>
            <person name="Goble A."/>
            <person name="Hamlin N."/>
            <person name="Harris D.E."/>
            <person name="Hidalgo J."/>
            <person name="Hodgson G."/>
            <person name="Holroyd S."/>
            <person name="Hornsby T."/>
            <person name="Howarth S."/>
            <person name="Huckle E.J."/>
            <person name="Hunt S."/>
            <person name="Jagels K."/>
            <person name="James K.D."/>
            <person name="Jones L."/>
            <person name="Jones M."/>
            <person name="Leather S."/>
            <person name="McDonald S."/>
            <person name="McLean J."/>
            <person name="Mooney P."/>
            <person name="Moule S."/>
            <person name="Mungall K.L."/>
            <person name="Murphy L.D."/>
            <person name="Niblett D."/>
            <person name="Odell C."/>
            <person name="Oliver K."/>
            <person name="O'Neil S."/>
            <person name="Pearson D."/>
            <person name="Quail M.A."/>
            <person name="Rabbinowitsch E."/>
            <person name="Rutherford K.M."/>
            <person name="Rutter S."/>
            <person name="Saunders D."/>
            <person name="Seeger K."/>
            <person name="Sharp S."/>
            <person name="Skelton J."/>
            <person name="Simmonds M.N."/>
            <person name="Squares R."/>
            <person name="Squares S."/>
            <person name="Stevens K."/>
            <person name="Taylor K."/>
            <person name="Taylor R.G."/>
            <person name="Tivey A."/>
            <person name="Walsh S.V."/>
            <person name="Warren T."/>
            <person name="Whitehead S."/>
            <person name="Woodward J.R."/>
            <person name="Volckaert G."/>
            <person name="Aert R."/>
            <person name="Robben J."/>
            <person name="Grymonprez B."/>
            <person name="Weltjens I."/>
            <person name="Vanstreels E."/>
            <person name="Rieger M."/>
            <person name="Schaefer M."/>
            <person name="Mueller-Auer S."/>
            <person name="Gabel C."/>
            <person name="Fuchs M."/>
            <person name="Duesterhoeft A."/>
            <person name="Fritzc C."/>
            <person name="Holzer E."/>
            <person name="Moestl D."/>
            <person name="Hilbert H."/>
            <person name="Borzym K."/>
            <person name="Langer I."/>
            <person name="Beck A."/>
            <person name="Lehrach H."/>
            <person name="Reinhardt R."/>
            <person name="Pohl T.M."/>
            <person name="Eger P."/>
            <person name="Zimmermann W."/>
            <person name="Wedler H."/>
            <person name="Wambutt R."/>
            <person name="Purnelle B."/>
            <person name="Goffeau A."/>
            <person name="Cadieu E."/>
            <person name="Dreano S."/>
            <person name="Gloux S."/>
            <person name="Lelaure V."/>
            <person name="Mottier S."/>
            <person name="Galibert F."/>
            <person name="Aves S.J."/>
            <person name="Xiang Z."/>
            <person name="Hunt C."/>
            <person name="Moore K."/>
            <person name="Hurst S.M."/>
            <person name="Lucas M."/>
            <person name="Rochet M."/>
            <person name="Gaillardin C."/>
            <person name="Tallada V.A."/>
            <person name="Garzon A."/>
            <person name="Thode G."/>
            <person name="Daga R.R."/>
            <person name="Cruzado L."/>
            <person name="Jimenez J."/>
            <person name="Sanchez M."/>
            <person name="del Rey F."/>
            <person name="Benito J."/>
            <person name="Dominguez A."/>
            <person name="Revuelta J.L."/>
            <person name="Moreno S."/>
            <person name="Armstrong J."/>
            <person name="Forsburg S.L."/>
            <person name="Cerutti L."/>
            <person name="Lowe T."/>
            <person name="McCombie W.R."/>
            <person name="Paulsen I."/>
            <person name="Potashkin J."/>
            <person name="Shpakovski G.V."/>
            <person name="Ussery D."/>
            <person name="Barrell B.G."/>
            <person name="Nurse P."/>
        </authorList>
    </citation>
    <scope>NUCLEOTIDE SEQUENCE [LARGE SCALE GENOMIC DNA]</scope>
    <source>
        <strain>972 / ATCC 24843</strain>
    </source>
</reference>
<sequence length="489" mass="53375">MVALVNNMRKITIPSVGGKLVSSGQFQNFIASCILFCCPGIYLAVTGLGAGGGHPDAYHMADVTNSLLYALFTVCGWAGGPILKYLGPRWALALGATGYPIYIGGLWYFDNTGKQGFTIFTGAYEGIAAGLLWASTAYISLSYSCANQKSQFIATQWTILAFGSTVGSFIAFGINYHSTSTGVPMAVYIIFIIIMACAVLLAILFIKSPSDVRKSDGTSALSPSNKTFGQELWGLFEAAKDWRLLCLLPASFASQSTIAWQSHLNSYYFSLRTRSLNNVLFWVIQFFVPYLFTLILDAKALKRRTRGIIGLTIQAVVIMATLSGELGWIVSKHIDLHDTSPDLDWTQRGYGGALVLYLLMGIQYGSSIVSVQWCISLLSSDPDKYARYAGLYKGTQAAGMCVSFGIDAAGVSFLGQGIIYFIFLFVMCASQLIMTSIFGKETDRLSTKEHFTDDKSYIDGVMPSTDTYMNEKTSDELDKKSLPSDQVYV</sequence>
<keyword id="KW-0472">Membrane</keyword>
<keyword id="KW-1185">Reference proteome</keyword>
<keyword id="KW-0812">Transmembrane</keyword>
<keyword id="KW-1133">Transmembrane helix</keyword>
<accession>O14237</accession>
<name>YEL4_SCHPO</name>
<organism>
    <name type="scientific">Schizosaccharomyces pombe (strain 972 / ATCC 24843)</name>
    <name type="common">Fission yeast</name>
    <dbReference type="NCBI Taxonomy" id="284812"/>
    <lineage>
        <taxon>Eukaryota</taxon>
        <taxon>Fungi</taxon>
        <taxon>Dikarya</taxon>
        <taxon>Ascomycota</taxon>
        <taxon>Taphrinomycotina</taxon>
        <taxon>Schizosaccharomycetes</taxon>
        <taxon>Schizosaccharomycetales</taxon>
        <taxon>Schizosaccharomycetaceae</taxon>
        <taxon>Schizosaccharomyces</taxon>
    </lineage>
</organism>
<comment type="subcellular location">
    <subcellularLocation>
        <location evidence="2">Membrane</location>
        <topology evidence="2">Multi-pass membrane protein</topology>
    </subcellularLocation>
</comment>
<dbReference type="EMBL" id="CU329670">
    <property type="protein sequence ID" value="CAB11728.1"/>
    <property type="molecule type" value="Genomic_DNA"/>
</dbReference>
<dbReference type="PIR" id="T39038">
    <property type="entry name" value="T39038"/>
</dbReference>
<dbReference type="RefSeq" id="NP_593897.1">
    <property type="nucleotide sequence ID" value="NM_001019327.2"/>
</dbReference>
<dbReference type="SMR" id="O14237"/>
<dbReference type="BioGRID" id="279193">
    <property type="interactions" value="2"/>
</dbReference>
<dbReference type="PaxDb" id="4896-SPAC6F6.04c.1"/>
<dbReference type="EnsemblFungi" id="SPAC6F6.04c.1">
    <property type="protein sequence ID" value="SPAC6F6.04c.1:pep"/>
    <property type="gene ID" value="SPAC6F6.04c"/>
</dbReference>
<dbReference type="KEGG" id="spo:2542743"/>
<dbReference type="PomBase" id="SPAC6F6.04c"/>
<dbReference type="VEuPathDB" id="FungiDB:SPAC6F6.04c"/>
<dbReference type="eggNOG" id="KOG3098">
    <property type="taxonomic scope" value="Eukaryota"/>
</dbReference>
<dbReference type="HOGENOM" id="CLU_030884_0_0_1"/>
<dbReference type="InParanoid" id="O14237"/>
<dbReference type="OMA" id="YVKETNY"/>
<dbReference type="PhylomeDB" id="O14237"/>
<dbReference type="PRO" id="PR:O14237"/>
<dbReference type="Proteomes" id="UP000002485">
    <property type="component" value="Chromosome I"/>
</dbReference>
<dbReference type="GO" id="GO:0016020">
    <property type="term" value="C:membrane"/>
    <property type="evidence" value="ECO:0007669"/>
    <property type="project" value="UniProtKB-SubCell"/>
</dbReference>
<dbReference type="GO" id="GO:0022857">
    <property type="term" value="F:transmembrane transporter activity"/>
    <property type="evidence" value="ECO:0000250"/>
    <property type="project" value="PomBase"/>
</dbReference>
<dbReference type="GO" id="GO:0055085">
    <property type="term" value="P:transmembrane transport"/>
    <property type="evidence" value="ECO:0000305"/>
    <property type="project" value="PomBase"/>
</dbReference>
<dbReference type="CDD" id="cd06178">
    <property type="entry name" value="MFS_unc93-like"/>
    <property type="match status" value="1"/>
</dbReference>
<dbReference type="Gene3D" id="1.20.1250.20">
    <property type="entry name" value="MFS general substrate transporter like domains"/>
    <property type="match status" value="1"/>
</dbReference>
<dbReference type="InterPro" id="IPR010291">
    <property type="entry name" value="Ion_channel_UNC-93"/>
</dbReference>
<dbReference type="InterPro" id="IPR036259">
    <property type="entry name" value="MFS_trans_sf"/>
</dbReference>
<dbReference type="InterPro" id="IPR051617">
    <property type="entry name" value="UNC-93-like_regulator"/>
</dbReference>
<dbReference type="PANTHER" id="PTHR23294">
    <property type="entry name" value="ET TRANSLATION PRODUCT-RELATED"/>
    <property type="match status" value="1"/>
</dbReference>
<dbReference type="PANTHER" id="PTHR23294:SF59">
    <property type="entry name" value="UNC93-LIKE PROTEIN C922.05C"/>
    <property type="match status" value="1"/>
</dbReference>
<dbReference type="Pfam" id="PF05978">
    <property type="entry name" value="UNC-93"/>
    <property type="match status" value="1"/>
</dbReference>
<dbReference type="SUPFAM" id="SSF103473">
    <property type="entry name" value="MFS general substrate transporter"/>
    <property type="match status" value="1"/>
</dbReference>
<gene>
    <name type="ORF">SPAC6F6.04c</name>
</gene>
<evidence type="ECO:0000255" key="1"/>
<evidence type="ECO:0000305" key="2"/>
<protein>
    <recommendedName>
        <fullName>Uncharacterized membrane protein C6F6.04c</fullName>
    </recommendedName>
</protein>
<feature type="chain" id="PRO_0000372359" description="Uncharacterized membrane protein C6F6.04c">
    <location>
        <begin position="1"/>
        <end position="489"/>
    </location>
</feature>
<feature type="transmembrane region" description="Helical" evidence="1">
    <location>
        <begin position="29"/>
        <end position="49"/>
    </location>
</feature>
<feature type="transmembrane region" description="Helical" evidence="1">
    <location>
        <begin position="67"/>
        <end position="87"/>
    </location>
</feature>
<feature type="transmembrane region" description="Helical" evidence="1">
    <location>
        <begin position="90"/>
        <end position="110"/>
    </location>
</feature>
<feature type="transmembrane region" description="Helical" evidence="1">
    <location>
        <begin position="119"/>
        <end position="139"/>
    </location>
</feature>
<feature type="transmembrane region" description="Helical" evidence="1">
    <location>
        <begin position="152"/>
        <end position="172"/>
    </location>
</feature>
<feature type="transmembrane region" description="Helical" evidence="1">
    <location>
        <begin position="186"/>
        <end position="206"/>
    </location>
</feature>
<feature type="transmembrane region" description="Helical" evidence="1">
    <location>
        <begin position="276"/>
        <end position="296"/>
    </location>
</feature>
<feature type="transmembrane region" description="Helical" evidence="1">
    <location>
        <begin position="308"/>
        <end position="328"/>
    </location>
</feature>
<feature type="transmembrane region" description="Helical" evidence="1">
    <location>
        <begin position="351"/>
        <end position="371"/>
    </location>
</feature>
<feature type="transmembrane region" description="Helical" evidence="1">
    <location>
        <begin position="397"/>
        <end position="417"/>
    </location>
</feature>
<feature type="transmembrane region" description="Helical" evidence="1">
    <location>
        <begin position="418"/>
        <end position="438"/>
    </location>
</feature>